<keyword id="KW-0067">ATP-binding</keyword>
<keyword id="KW-0963">Cytoplasm</keyword>
<keyword id="KW-0329">Glyoxylate bypass</keyword>
<keyword id="KW-0378">Hydrolase</keyword>
<keyword id="KW-0418">Kinase</keyword>
<keyword id="KW-0547">Nucleotide-binding</keyword>
<keyword id="KW-0904">Protein phosphatase</keyword>
<keyword id="KW-0723">Serine/threonine-protein kinase</keyword>
<keyword id="KW-0808">Transferase</keyword>
<keyword id="KW-0816">Tricarboxylic acid cycle</keyword>
<comment type="function">
    <text evidence="1">Bifunctional enzyme which can phosphorylate or dephosphorylate isocitrate dehydrogenase (IDH) on a specific serine residue. This is a regulatory mechanism which enables bacteria to bypass the Krebs cycle via the glyoxylate shunt in response to the source of carbon. When bacteria are grown on glucose, IDH is fully active and unphosphorylated, but when grown on acetate or ethanol, the activity of IDH declines drastically concomitant with its phosphorylation.</text>
</comment>
<comment type="catalytic activity">
    <reaction evidence="1">
        <text>L-seryl-[isocitrate dehydrogenase] + ATP = O-phospho-L-seryl-[isocitrate dehydrogenase] + ADP + H(+)</text>
        <dbReference type="Rhea" id="RHEA:43540"/>
        <dbReference type="Rhea" id="RHEA-COMP:10605"/>
        <dbReference type="Rhea" id="RHEA-COMP:10606"/>
        <dbReference type="ChEBI" id="CHEBI:15378"/>
        <dbReference type="ChEBI" id="CHEBI:29999"/>
        <dbReference type="ChEBI" id="CHEBI:30616"/>
        <dbReference type="ChEBI" id="CHEBI:83421"/>
        <dbReference type="ChEBI" id="CHEBI:456216"/>
        <dbReference type="EC" id="2.7.11.5"/>
    </reaction>
</comment>
<comment type="subcellular location">
    <subcellularLocation>
        <location evidence="1">Cytoplasm</location>
    </subcellularLocation>
</comment>
<comment type="similarity">
    <text evidence="1">Belongs to the AceK family.</text>
</comment>
<dbReference type="EC" id="2.7.11.5" evidence="1"/>
<dbReference type="EC" id="3.1.3.-" evidence="1"/>
<dbReference type="EMBL" id="CP000647">
    <property type="protein sequence ID" value="ABR79752.1"/>
    <property type="molecule type" value="Genomic_DNA"/>
</dbReference>
<dbReference type="RefSeq" id="WP_002884575.1">
    <property type="nucleotide sequence ID" value="NC_009648.1"/>
</dbReference>
<dbReference type="SMR" id="A6TGR8"/>
<dbReference type="STRING" id="272620.KPN_04397"/>
<dbReference type="PaxDb" id="272620-KPN_04397"/>
<dbReference type="EnsemblBacteria" id="ABR79752">
    <property type="protein sequence ID" value="ABR79752"/>
    <property type="gene ID" value="KPN_04397"/>
</dbReference>
<dbReference type="KEGG" id="kpn:KPN_04397"/>
<dbReference type="HOGENOM" id="CLU_033804_1_1_6"/>
<dbReference type="Proteomes" id="UP000000265">
    <property type="component" value="Chromosome"/>
</dbReference>
<dbReference type="GO" id="GO:0005737">
    <property type="term" value="C:cytoplasm"/>
    <property type="evidence" value="ECO:0007669"/>
    <property type="project" value="UniProtKB-SubCell"/>
</dbReference>
<dbReference type="GO" id="GO:0008772">
    <property type="term" value="F:[isocitrate dehydrogenase (NADP+)] kinase activity"/>
    <property type="evidence" value="ECO:0007669"/>
    <property type="project" value="UniProtKB-UniRule"/>
</dbReference>
<dbReference type="GO" id="GO:0016208">
    <property type="term" value="F:AMP binding"/>
    <property type="evidence" value="ECO:0007669"/>
    <property type="project" value="TreeGrafter"/>
</dbReference>
<dbReference type="GO" id="GO:0005524">
    <property type="term" value="F:ATP binding"/>
    <property type="evidence" value="ECO:0007669"/>
    <property type="project" value="UniProtKB-UniRule"/>
</dbReference>
<dbReference type="GO" id="GO:0004721">
    <property type="term" value="F:phosphoprotein phosphatase activity"/>
    <property type="evidence" value="ECO:0007669"/>
    <property type="project" value="UniProtKB-KW"/>
</dbReference>
<dbReference type="GO" id="GO:0004674">
    <property type="term" value="F:protein serine/threonine kinase activity"/>
    <property type="evidence" value="ECO:0007669"/>
    <property type="project" value="UniProtKB-KW"/>
</dbReference>
<dbReference type="GO" id="GO:0006006">
    <property type="term" value="P:glucose metabolic process"/>
    <property type="evidence" value="ECO:0007669"/>
    <property type="project" value="InterPro"/>
</dbReference>
<dbReference type="GO" id="GO:0006097">
    <property type="term" value="P:glyoxylate cycle"/>
    <property type="evidence" value="ECO:0007669"/>
    <property type="project" value="UniProtKB-UniRule"/>
</dbReference>
<dbReference type="GO" id="GO:0006099">
    <property type="term" value="P:tricarboxylic acid cycle"/>
    <property type="evidence" value="ECO:0007669"/>
    <property type="project" value="UniProtKB-UniRule"/>
</dbReference>
<dbReference type="HAMAP" id="MF_00747">
    <property type="entry name" value="AceK"/>
    <property type="match status" value="1"/>
</dbReference>
<dbReference type="InterPro" id="IPR046855">
    <property type="entry name" value="AceK_kinase"/>
</dbReference>
<dbReference type="InterPro" id="IPR046854">
    <property type="entry name" value="AceK_regulatory"/>
</dbReference>
<dbReference type="InterPro" id="IPR010452">
    <property type="entry name" value="Isocitrate_DH_AceK"/>
</dbReference>
<dbReference type="NCBIfam" id="NF002804">
    <property type="entry name" value="PRK02946.1"/>
    <property type="match status" value="1"/>
</dbReference>
<dbReference type="PANTHER" id="PTHR39559">
    <property type="match status" value="1"/>
</dbReference>
<dbReference type="PANTHER" id="PTHR39559:SF1">
    <property type="entry name" value="ISOCITRATE DEHYDROGENASE KINASE_PHOSPHATASE"/>
    <property type="match status" value="1"/>
</dbReference>
<dbReference type="Pfam" id="PF06315">
    <property type="entry name" value="AceK_kinase"/>
    <property type="match status" value="1"/>
</dbReference>
<dbReference type="Pfam" id="PF20423">
    <property type="entry name" value="AceK_regulatory"/>
    <property type="match status" value="1"/>
</dbReference>
<dbReference type="PIRSF" id="PIRSF000719">
    <property type="entry name" value="AceK"/>
    <property type="match status" value="1"/>
</dbReference>
<sequence length="594" mass="68844">MTRGLELLIAQTILQGFDAQYGRFLEVTSGAQQRFEQADWHAVQQAMKQRIHLYDHHVGLVVEQLRCITEGKSTDVDFLLRVKQQYTQLLPDYPRFEIAESFFNSVYCRLFDHRSLTPERLFIFSSQPERPFRTLPRPLAKDFFPERGWSHLLGKVLSDLPLRLPWQNKARDIGYIIASLQEALGEELLATCHLQVANELFYRNKAAWLVGKLVMPMATLPFLLPIHRSEEGELFVDTCLTTHAEASIVFGFARSYFMVYAPLPGALVEWLREILPGKTTAELYMAIGCQKHAKTESYREYLHYITRCDEQFIEAPGIRGMVMLVFTLPGFDRVFKVIKDRFAPQKEMTAAHVRACYQLVKEHDRVGRMADTQEFENFVLDKRQIAPALLALLQAEAGNKLTDLGDRIVISHLYIERRMVPLNLWLEQVNGQALRDAVEEYGNAIRQLAAANIFPGDMLFKNFGVTRHGRVVFYDYDEICYMTEVNFREIPPPRYPEDELASEPWYSVSPGDVFPEEFRHWLCADPRIGPLFEEMHADLLRADYWRALQMRIKNGHVEDVYAYRRKQRFSVRYGADSRPDKAFTPPSGKVRRSA</sequence>
<feature type="chain" id="PRO_1000046553" description="Isocitrate dehydrogenase kinase/phosphatase">
    <location>
        <begin position="1"/>
        <end position="594"/>
    </location>
</feature>
<feature type="active site" evidence="1">
    <location>
        <position position="371"/>
    </location>
</feature>
<feature type="binding site" evidence="1">
    <location>
        <begin position="315"/>
        <end position="321"/>
    </location>
    <ligand>
        <name>ATP</name>
        <dbReference type="ChEBI" id="CHEBI:30616"/>
    </ligand>
</feature>
<feature type="binding site" evidence="1">
    <location>
        <position position="336"/>
    </location>
    <ligand>
        <name>ATP</name>
        <dbReference type="ChEBI" id="CHEBI:30616"/>
    </ligand>
</feature>
<evidence type="ECO:0000255" key="1">
    <source>
        <dbReference type="HAMAP-Rule" id="MF_00747"/>
    </source>
</evidence>
<organism>
    <name type="scientific">Klebsiella pneumoniae subsp. pneumoniae (strain ATCC 700721 / MGH 78578)</name>
    <dbReference type="NCBI Taxonomy" id="272620"/>
    <lineage>
        <taxon>Bacteria</taxon>
        <taxon>Pseudomonadati</taxon>
        <taxon>Pseudomonadota</taxon>
        <taxon>Gammaproteobacteria</taxon>
        <taxon>Enterobacterales</taxon>
        <taxon>Enterobacteriaceae</taxon>
        <taxon>Klebsiella/Raoultella group</taxon>
        <taxon>Klebsiella</taxon>
        <taxon>Klebsiella pneumoniae complex</taxon>
    </lineage>
</organism>
<reference key="1">
    <citation type="submission" date="2006-09" db="EMBL/GenBank/DDBJ databases">
        <authorList>
            <consortium name="The Klebsiella pneumonia Genome Sequencing Project"/>
            <person name="McClelland M."/>
            <person name="Sanderson E.K."/>
            <person name="Spieth J."/>
            <person name="Clifton W.S."/>
            <person name="Latreille P."/>
            <person name="Sabo A."/>
            <person name="Pepin K."/>
            <person name="Bhonagiri V."/>
            <person name="Porwollik S."/>
            <person name="Ali J."/>
            <person name="Wilson R.K."/>
        </authorList>
    </citation>
    <scope>NUCLEOTIDE SEQUENCE [LARGE SCALE GENOMIC DNA]</scope>
    <source>
        <strain>ATCC 700721 / MGH 78578</strain>
    </source>
</reference>
<gene>
    <name evidence="1" type="primary">aceK</name>
    <name type="ordered locus">KPN78578_43280</name>
    <name type="ORF">KPN_04397</name>
</gene>
<accession>A6TGR8</accession>
<proteinExistence type="inferred from homology"/>
<name>ACEK_KLEP7</name>
<protein>
    <recommendedName>
        <fullName evidence="1">Isocitrate dehydrogenase kinase/phosphatase</fullName>
        <shortName evidence="1">IDH kinase/phosphatase</shortName>
        <shortName evidence="1">IDHK/P</shortName>
        <ecNumber evidence="1">2.7.11.5</ecNumber>
        <ecNumber evidence="1">3.1.3.-</ecNumber>
    </recommendedName>
</protein>